<evidence type="ECO:0000250" key="1"/>
<evidence type="ECO:0000305" key="2"/>
<name>RK22_SOLTU</name>
<comment type="function">
    <text evidence="1">This protein binds specifically to 23S rRNA.</text>
</comment>
<comment type="function">
    <text evidence="1">The globular domain of the protein is located near the polypeptide exit tunnel on the outside of the subunit, while an extended beta-hairpin is found that lines the wall of the exit tunnel in the center of the 70S ribosome.</text>
</comment>
<comment type="subunit">
    <text evidence="1">Part of the 50S ribosomal subunit.</text>
</comment>
<comment type="subcellular location">
    <subcellularLocation>
        <location>Plastid</location>
        <location>Chloroplast</location>
    </subcellularLocation>
</comment>
<comment type="similarity">
    <text evidence="2">Belongs to the universal ribosomal protein uL22 family.</text>
</comment>
<reference key="1">
    <citation type="journal article" date="2006" name="Plant Cell Rep.">
        <title>The complete chloroplast genome sequences of Solanum tuberosum and comparative analysis with Solanaceae species identified the presence of a 241-bp deletion in cultivated potato chloroplast DNA sequence.</title>
        <authorList>
            <person name="Chung H.-J."/>
            <person name="Jung J.D."/>
            <person name="Park H.-W."/>
            <person name="Kim J.-H."/>
            <person name="Cha H.W."/>
            <person name="Min S.R."/>
            <person name="Jeong W.-J."/>
            <person name="Liu J.R."/>
        </authorList>
    </citation>
    <scope>NUCLEOTIDE SEQUENCE [LARGE SCALE GENOMIC DNA]</scope>
    <source>
        <strain>cv. Desiree</strain>
    </source>
</reference>
<reference key="2">
    <citation type="submission" date="2006-02" db="EMBL/GenBank/DDBJ databases">
        <title>Complete chloroplast genome sequences of Solanum tuberosum cultivar Desiree and comparative analyses with other Solanaceae genomes.</title>
        <authorList>
            <person name="Gargano D."/>
            <person name="Scotti N."/>
            <person name="Vezzi A."/>
            <person name="Bilardi A."/>
            <person name="Valle G."/>
            <person name="Grillo S."/>
            <person name="Cardi T."/>
        </authorList>
    </citation>
    <scope>NUCLEOTIDE SEQUENCE [LARGE SCALE GENOMIC DNA]</scope>
    <source>
        <strain>cv. Desiree</strain>
    </source>
</reference>
<protein>
    <recommendedName>
        <fullName evidence="2">Large ribosomal subunit protein uL22c</fullName>
    </recommendedName>
    <alternativeName>
        <fullName>50S ribosomal protein L22, chloroplastic</fullName>
    </alternativeName>
</protein>
<keyword id="KW-0150">Chloroplast</keyword>
<keyword id="KW-0934">Plastid</keyword>
<keyword id="KW-1185">Reference proteome</keyword>
<keyword id="KW-0687">Ribonucleoprotein</keyword>
<keyword id="KW-0689">Ribosomal protein</keyword>
<keyword id="KW-0694">RNA-binding</keyword>
<keyword id="KW-0699">rRNA-binding</keyword>
<accession>Q2VEE1</accession>
<geneLocation type="chloroplast"/>
<dbReference type="EMBL" id="DQ231562">
    <property type="protein sequence ID" value="ABB90077.1"/>
    <property type="molecule type" value="Genomic_DNA"/>
</dbReference>
<dbReference type="EMBL" id="DQ386163">
    <property type="protein sequence ID" value="ABD47095.1"/>
    <property type="molecule type" value="Genomic_DNA"/>
</dbReference>
<dbReference type="RefSeq" id="YP_635678.1">
    <property type="nucleotide sequence ID" value="NC_008096.2"/>
</dbReference>
<dbReference type="SMR" id="Q2VEE1"/>
<dbReference type="FunCoup" id="Q2VEE1">
    <property type="interactions" value="365"/>
</dbReference>
<dbReference type="STRING" id="4113.Q2VEE1"/>
<dbReference type="GeneID" id="4099883"/>
<dbReference type="KEGG" id="sot:4099883"/>
<dbReference type="InParanoid" id="Q2VEE1"/>
<dbReference type="OrthoDB" id="1840754at2759"/>
<dbReference type="Proteomes" id="UP000011115">
    <property type="component" value="Unassembled WGS sequence"/>
</dbReference>
<dbReference type="GO" id="GO:0009507">
    <property type="term" value="C:chloroplast"/>
    <property type="evidence" value="ECO:0007669"/>
    <property type="project" value="UniProtKB-SubCell"/>
</dbReference>
<dbReference type="GO" id="GO:0015934">
    <property type="term" value="C:large ribosomal subunit"/>
    <property type="evidence" value="ECO:0000318"/>
    <property type="project" value="GO_Central"/>
</dbReference>
<dbReference type="GO" id="GO:0019843">
    <property type="term" value="F:rRNA binding"/>
    <property type="evidence" value="ECO:0007669"/>
    <property type="project" value="UniProtKB-UniRule"/>
</dbReference>
<dbReference type="GO" id="GO:0003735">
    <property type="term" value="F:structural constituent of ribosome"/>
    <property type="evidence" value="ECO:0000318"/>
    <property type="project" value="GO_Central"/>
</dbReference>
<dbReference type="GO" id="GO:0006412">
    <property type="term" value="P:translation"/>
    <property type="evidence" value="ECO:0000318"/>
    <property type="project" value="GO_Central"/>
</dbReference>
<dbReference type="CDD" id="cd00336">
    <property type="entry name" value="Ribosomal_L22"/>
    <property type="match status" value="1"/>
</dbReference>
<dbReference type="FunFam" id="3.90.470.10:FF:000006">
    <property type="entry name" value="50S ribosomal protein L22, chloroplastic"/>
    <property type="match status" value="1"/>
</dbReference>
<dbReference type="Gene3D" id="3.90.470.10">
    <property type="entry name" value="Ribosomal protein L22/L17"/>
    <property type="match status" value="1"/>
</dbReference>
<dbReference type="HAMAP" id="MF_01331_B">
    <property type="entry name" value="Ribosomal_uL22_B"/>
    <property type="match status" value="1"/>
</dbReference>
<dbReference type="InterPro" id="IPR001063">
    <property type="entry name" value="Ribosomal_uL22"/>
</dbReference>
<dbReference type="InterPro" id="IPR005727">
    <property type="entry name" value="Ribosomal_uL22_bac/chlpt-type"/>
</dbReference>
<dbReference type="InterPro" id="IPR047867">
    <property type="entry name" value="Ribosomal_uL22_bac/org-type"/>
</dbReference>
<dbReference type="InterPro" id="IPR018260">
    <property type="entry name" value="Ribosomal_uL22_CS"/>
</dbReference>
<dbReference type="InterPro" id="IPR036394">
    <property type="entry name" value="Ribosomal_uL22_sf"/>
</dbReference>
<dbReference type="NCBIfam" id="TIGR01044">
    <property type="entry name" value="rplV_bact"/>
    <property type="match status" value="1"/>
</dbReference>
<dbReference type="PANTHER" id="PTHR13501">
    <property type="entry name" value="CHLOROPLAST 50S RIBOSOMAL PROTEIN L22-RELATED"/>
    <property type="match status" value="1"/>
</dbReference>
<dbReference type="PANTHER" id="PTHR13501:SF10">
    <property type="entry name" value="LARGE RIBOSOMAL SUBUNIT PROTEIN UL22M"/>
    <property type="match status" value="1"/>
</dbReference>
<dbReference type="Pfam" id="PF00237">
    <property type="entry name" value="Ribosomal_L22"/>
    <property type="match status" value="1"/>
</dbReference>
<dbReference type="SUPFAM" id="SSF54843">
    <property type="entry name" value="Ribosomal protein L22"/>
    <property type="match status" value="1"/>
</dbReference>
<dbReference type="PROSITE" id="PS00464">
    <property type="entry name" value="RIBOSOMAL_L22"/>
    <property type="match status" value="1"/>
</dbReference>
<feature type="chain" id="PRO_0000243246" description="Large ribosomal subunit protein uL22c">
    <location>
        <begin position="1"/>
        <end position="155"/>
    </location>
</feature>
<organism>
    <name type="scientific">Solanum tuberosum</name>
    <name type="common">Potato</name>
    <dbReference type="NCBI Taxonomy" id="4113"/>
    <lineage>
        <taxon>Eukaryota</taxon>
        <taxon>Viridiplantae</taxon>
        <taxon>Streptophyta</taxon>
        <taxon>Embryophyta</taxon>
        <taxon>Tracheophyta</taxon>
        <taxon>Spermatophyta</taxon>
        <taxon>Magnoliopsida</taxon>
        <taxon>eudicotyledons</taxon>
        <taxon>Gunneridae</taxon>
        <taxon>Pentapetalae</taxon>
        <taxon>asterids</taxon>
        <taxon>lamiids</taxon>
        <taxon>Solanales</taxon>
        <taxon>Solanaceae</taxon>
        <taxon>Solanoideae</taxon>
        <taxon>Solaneae</taxon>
        <taxon>Solanum</taxon>
    </lineage>
</organism>
<gene>
    <name type="primary">rpl22</name>
</gene>
<sequence>MLKKKKTEVYALGEHISMSADKARRVIDQIRGRSYEETLMILELMPYRACYPILKLVYSAAANASYNMGSNETNLVISKAEVNEGTTVKKLKPRARGRSFPIKRSTCHITIVMKDISLDDEYGEMSSLKKTRWKKKSTAMTYRDMYNSGGLWDKK</sequence>
<proteinExistence type="inferred from homology"/>